<evidence type="ECO:0000255" key="1">
    <source>
        <dbReference type="HAMAP-Rule" id="MF_00402"/>
    </source>
</evidence>
<evidence type="ECO:0000305" key="2"/>
<reference key="1">
    <citation type="journal article" date="2005" name="J. Bacteriol.">
        <title>Insights on evolution of virulence and resistance from the complete genome analysis of an early methicillin-resistant Staphylococcus aureus strain and a biofilm-producing methicillin-resistant Staphylococcus epidermidis strain.</title>
        <authorList>
            <person name="Gill S.R."/>
            <person name="Fouts D.E."/>
            <person name="Archer G.L."/>
            <person name="Mongodin E.F."/>
            <person name="DeBoy R.T."/>
            <person name="Ravel J."/>
            <person name="Paulsen I.T."/>
            <person name="Kolonay J.F."/>
            <person name="Brinkac L.M."/>
            <person name="Beanan M.J."/>
            <person name="Dodson R.J."/>
            <person name="Daugherty S.C."/>
            <person name="Madupu R."/>
            <person name="Angiuoli S.V."/>
            <person name="Durkin A.S."/>
            <person name="Haft D.H."/>
            <person name="Vamathevan J.J."/>
            <person name="Khouri H."/>
            <person name="Utterback T.R."/>
            <person name="Lee C."/>
            <person name="Dimitrov G."/>
            <person name="Jiang L."/>
            <person name="Qin H."/>
            <person name="Weidman J."/>
            <person name="Tran K."/>
            <person name="Kang K.H."/>
            <person name="Hance I.R."/>
            <person name="Nelson K.E."/>
            <person name="Fraser C.M."/>
        </authorList>
    </citation>
    <scope>NUCLEOTIDE SEQUENCE [LARGE SCALE GENOMIC DNA]</scope>
    <source>
        <strain>ATCC 35984 / DSM 28319 / BCRC 17069 / CCUG 31568 / BM 3577 / RP62A</strain>
    </source>
</reference>
<protein>
    <recommendedName>
        <fullName evidence="1">Large ribosomal subunit protein bL19</fullName>
    </recommendedName>
    <alternativeName>
        <fullName evidence="2">50S ribosomal protein L19</fullName>
    </alternativeName>
</protein>
<feature type="chain" id="PRO_0000163535" description="Large ribosomal subunit protein bL19">
    <location>
        <begin position="1"/>
        <end position="116"/>
    </location>
</feature>
<gene>
    <name evidence="1" type="primary">rplS</name>
    <name type="ordered locus">SERP0807</name>
</gene>
<name>RL19_STAEQ</name>
<sequence>MSNHKLIEAVTKSQLRTDLPTFRSGDTLRVHVRIVEGSRERIQVFEGVVIKRRGGGISETFTVRKISSGVGVERTFPLHTPKIEKIEVKRRGKVRRAKLYYLRSLRGKAARIQEIR</sequence>
<organism>
    <name type="scientific">Staphylococcus epidermidis (strain ATCC 35984 / DSM 28319 / BCRC 17069 / CCUG 31568 / BM 3577 / RP62A)</name>
    <dbReference type="NCBI Taxonomy" id="176279"/>
    <lineage>
        <taxon>Bacteria</taxon>
        <taxon>Bacillati</taxon>
        <taxon>Bacillota</taxon>
        <taxon>Bacilli</taxon>
        <taxon>Bacillales</taxon>
        <taxon>Staphylococcaceae</taxon>
        <taxon>Staphylococcus</taxon>
    </lineage>
</organism>
<proteinExistence type="inferred from homology"/>
<comment type="function">
    <text evidence="1">This protein is located at the 30S-50S ribosomal subunit interface and may play a role in the structure and function of the aminoacyl-tRNA binding site.</text>
</comment>
<comment type="similarity">
    <text evidence="1">Belongs to the bacterial ribosomal protein bL19 family.</text>
</comment>
<dbReference type="EMBL" id="CP000029">
    <property type="protein sequence ID" value="AAW54146.1"/>
    <property type="molecule type" value="Genomic_DNA"/>
</dbReference>
<dbReference type="RefSeq" id="WP_002436293.1">
    <property type="nucleotide sequence ID" value="NC_002976.3"/>
</dbReference>
<dbReference type="SMR" id="Q5HPV0"/>
<dbReference type="STRING" id="176279.SERP0807"/>
<dbReference type="GeneID" id="93669720"/>
<dbReference type="KEGG" id="ser:SERP0807"/>
<dbReference type="eggNOG" id="COG0335">
    <property type="taxonomic scope" value="Bacteria"/>
</dbReference>
<dbReference type="HOGENOM" id="CLU_103507_2_1_9"/>
<dbReference type="Proteomes" id="UP000000531">
    <property type="component" value="Chromosome"/>
</dbReference>
<dbReference type="GO" id="GO:0022625">
    <property type="term" value="C:cytosolic large ribosomal subunit"/>
    <property type="evidence" value="ECO:0007669"/>
    <property type="project" value="TreeGrafter"/>
</dbReference>
<dbReference type="GO" id="GO:0003735">
    <property type="term" value="F:structural constituent of ribosome"/>
    <property type="evidence" value="ECO:0007669"/>
    <property type="project" value="InterPro"/>
</dbReference>
<dbReference type="GO" id="GO:0006412">
    <property type="term" value="P:translation"/>
    <property type="evidence" value="ECO:0007669"/>
    <property type="project" value="UniProtKB-UniRule"/>
</dbReference>
<dbReference type="FunFam" id="2.30.30.790:FF:000001">
    <property type="entry name" value="50S ribosomal protein L19"/>
    <property type="match status" value="1"/>
</dbReference>
<dbReference type="Gene3D" id="2.30.30.790">
    <property type="match status" value="1"/>
</dbReference>
<dbReference type="HAMAP" id="MF_00402">
    <property type="entry name" value="Ribosomal_bL19"/>
    <property type="match status" value="1"/>
</dbReference>
<dbReference type="InterPro" id="IPR001857">
    <property type="entry name" value="Ribosomal_bL19"/>
</dbReference>
<dbReference type="InterPro" id="IPR018257">
    <property type="entry name" value="Ribosomal_bL19_CS"/>
</dbReference>
<dbReference type="InterPro" id="IPR038657">
    <property type="entry name" value="Ribosomal_bL19_sf"/>
</dbReference>
<dbReference type="InterPro" id="IPR008991">
    <property type="entry name" value="Translation_prot_SH3-like_sf"/>
</dbReference>
<dbReference type="NCBIfam" id="TIGR01024">
    <property type="entry name" value="rplS_bact"/>
    <property type="match status" value="1"/>
</dbReference>
<dbReference type="PANTHER" id="PTHR15680:SF9">
    <property type="entry name" value="LARGE RIBOSOMAL SUBUNIT PROTEIN BL19M"/>
    <property type="match status" value="1"/>
</dbReference>
<dbReference type="PANTHER" id="PTHR15680">
    <property type="entry name" value="RIBOSOMAL PROTEIN L19"/>
    <property type="match status" value="1"/>
</dbReference>
<dbReference type="Pfam" id="PF01245">
    <property type="entry name" value="Ribosomal_L19"/>
    <property type="match status" value="1"/>
</dbReference>
<dbReference type="PIRSF" id="PIRSF002191">
    <property type="entry name" value="Ribosomal_L19"/>
    <property type="match status" value="1"/>
</dbReference>
<dbReference type="PRINTS" id="PR00061">
    <property type="entry name" value="RIBOSOMALL19"/>
</dbReference>
<dbReference type="SUPFAM" id="SSF50104">
    <property type="entry name" value="Translation proteins SH3-like domain"/>
    <property type="match status" value="1"/>
</dbReference>
<dbReference type="PROSITE" id="PS01015">
    <property type="entry name" value="RIBOSOMAL_L19"/>
    <property type="match status" value="1"/>
</dbReference>
<keyword id="KW-1185">Reference proteome</keyword>
<keyword id="KW-0687">Ribonucleoprotein</keyword>
<keyword id="KW-0689">Ribosomal protein</keyword>
<accession>Q5HPV0</accession>